<protein>
    <recommendedName>
        <fullName>14-3-3-like protein</fullName>
    </recommendedName>
</protein>
<dbReference type="EMBL" id="X79445">
    <property type="protein sequence ID" value="CAA55964.1"/>
    <property type="molecule type" value="mRNA"/>
</dbReference>
<dbReference type="EMBL" id="Y19105">
    <property type="protein sequence ID" value="CAC03467.1"/>
    <property type="molecule type" value="Genomic_DNA"/>
</dbReference>
<dbReference type="PIR" id="S57283">
    <property type="entry name" value="S57283"/>
</dbReference>
<dbReference type="RefSeq" id="XP_001702812.1">
    <property type="nucleotide sequence ID" value="XM_001702760.2"/>
</dbReference>
<dbReference type="SMR" id="P52908"/>
<dbReference type="PaxDb" id="3055-EDO96857"/>
<dbReference type="ProMEX" id="P52908"/>
<dbReference type="EnsemblPlants" id="PNW75821">
    <property type="protein sequence ID" value="PNW75821"/>
    <property type="gene ID" value="CHLRE_12g559250v5"/>
</dbReference>
<dbReference type="GeneID" id="5728351"/>
<dbReference type="Gramene" id="PNW75821">
    <property type="protein sequence ID" value="PNW75821"/>
    <property type="gene ID" value="CHLRE_12g559250v5"/>
</dbReference>
<dbReference type="KEGG" id="cre:CHLRE_12g559250v5"/>
<dbReference type="eggNOG" id="KOG0841">
    <property type="taxonomic scope" value="Eukaryota"/>
</dbReference>
<dbReference type="HOGENOM" id="CLU_058290_0_0_1"/>
<dbReference type="OMA" id="SRITGEW"/>
<dbReference type="OrthoDB" id="10260625at2759"/>
<dbReference type="CDD" id="cd10026">
    <property type="entry name" value="14-3-3_plant"/>
    <property type="match status" value="1"/>
</dbReference>
<dbReference type="FunFam" id="1.20.190.20:FF:000002">
    <property type="entry name" value="14-3-3 protein epsilon"/>
    <property type="match status" value="1"/>
</dbReference>
<dbReference type="Gene3D" id="1.20.190.20">
    <property type="entry name" value="14-3-3 domain"/>
    <property type="match status" value="1"/>
</dbReference>
<dbReference type="InterPro" id="IPR000308">
    <property type="entry name" value="14-3-3"/>
</dbReference>
<dbReference type="InterPro" id="IPR023409">
    <property type="entry name" value="14-3-3_CS"/>
</dbReference>
<dbReference type="InterPro" id="IPR036815">
    <property type="entry name" value="14-3-3_dom_sf"/>
</dbReference>
<dbReference type="InterPro" id="IPR023410">
    <property type="entry name" value="14-3-3_domain"/>
</dbReference>
<dbReference type="PANTHER" id="PTHR18860">
    <property type="entry name" value="14-3-3 PROTEIN"/>
    <property type="match status" value="1"/>
</dbReference>
<dbReference type="Pfam" id="PF00244">
    <property type="entry name" value="14-3-3"/>
    <property type="match status" value="1"/>
</dbReference>
<dbReference type="PIRSF" id="PIRSF000868">
    <property type="entry name" value="14-3-3"/>
    <property type="match status" value="1"/>
</dbReference>
<dbReference type="PRINTS" id="PR00305">
    <property type="entry name" value="1433ZETA"/>
</dbReference>
<dbReference type="SMART" id="SM00101">
    <property type="entry name" value="14_3_3"/>
    <property type="match status" value="1"/>
</dbReference>
<dbReference type="SUPFAM" id="SSF48445">
    <property type="entry name" value="14-3-3 protein"/>
    <property type="match status" value="1"/>
</dbReference>
<dbReference type="PROSITE" id="PS00796">
    <property type="entry name" value="1433_1"/>
    <property type="match status" value="1"/>
</dbReference>
<dbReference type="PROSITE" id="PS00797">
    <property type="entry name" value="1433_2"/>
    <property type="match status" value="1"/>
</dbReference>
<sequence>MAVDREECVYMAKLAEQAERYDEMVEEMKKVAKLVHDQELSVEERNLLSVAYKNVIGARRASWRIISSIEQKEEAKGNEEHVQRIRKYRTVVEEELSKICASILQLLDDHLIPTASTGESKVFYLKMKGDYHRYLAEFKTGADRKEAAEHTLLAYKAAQDIALVDLPPTHPIRLGLALNFSVFYYEILNSPERACHLAKQAFDEAIAELDSLGEESYKDSTLIMQLLRDNLTLWTSDMQDPAAGDDREGADMKVEDAEP</sequence>
<name>1433_CHLRE</name>
<proteinExistence type="evidence at transcript level"/>
<accession>P52908</accession>
<reference key="1">
    <citation type="journal article" date="1995" name="Biochim. Biophys. Acta">
        <title>A Chlamydomonas homologue to the 14-3-3 proteins: cDNA and deduced amino acid sequence.</title>
        <authorList>
            <person name="Lieblich I."/>
            <person name="Voigt J."/>
        </authorList>
    </citation>
    <scope>NUCLEOTIDE SEQUENCE [MRNA]</scope>
    <source>
        <strain>cw15</strain>
    </source>
</reference>
<reference key="2">
    <citation type="journal article" date="2000" name="Biochim. Biophys. Acta">
        <title>Nucleotide sequence, genomic organization and cell-cycle-dependent expression of a Chlamydomonas 14-3-3 gene.</title>
        <authorList>
            <person name="Voigt J."/>
            <person name="Liebich I."/>
            <person name="Woestemeyer J."/>
            <person name="Adam K.H."/>
            <person name="Marquardt O."/>
        </authorList>
    </citation>
    <scope>NUCLEOTIDE SEQUENCE [GENOMIC DNA]</scope>
</reference>
<organism>
    <name type="scientific">Chlamydomonas reinhardtii</name>
    <name type="common">Chlamydomonas smithii</name>
    <dbReference type="NCBI Taxonomy" id="3055"/>
    <lineage>
        <taxon>Eukaryota</taxon>
        <taxon>Viridiplantae</taxon>
        <taxon>Chlorophyta</taxon>
        <taxon>core chlorophytes</taxon>
        <taxon>Chlorophyceae</taxon>
        <taxon>CS clade</taxon>
        <taxon>Chlamydomonadales</taxon>
        <taxon>Chlamydomonadaceae</taxon>
        <taxon>Chlamydomonas</taxon>
    </lineage>
</organism>
<evidence type="ECO:0000256" key="1">
    <source>
        <dbReference type="SAM" id="MobiDB-lite"/>
    </source>
</evidence>
<evidence type="ECO:0000305" key="2"/>
<feature type="chain" id="PRO_0000058675" description="14-3-3-like protein">
    <location>
        <begin position="1"/>
        <end position="259"/>
    </location>
</feature>
<feature type="region of interest" description="Disordered" evidence="1">
    <location>
        <begin position="238"/>
        <end position="259"/>
    </location>
</feature>
<feature type="compositionally biased region" description="Basic and acidic residues" evidence="1">
    <location>
        <begin position="244"/>
        <end position="259"/>
    </location>
</feature>
<comment type="similarity">
    <text evidence="2">Belongs to the 14-3-3 family.</text>
</comment>